<keyword id="KW-0191">Covalent protein-RNA linkage</keyword>
<keyword id="KW-0342">GTP-binding</keyword>
<keyword id="KW-0547">Nucleotide-binding</keyword>
<keyword id="KW-0548">Nucleotidyltransferase</keyword>
<keyword id="KW-0597">Phosphoprotein</keyword>
<keyword id="KW-0696">RNA-directed RNA polymerase</keyword>
<keyword id="KW-0808">Transferase</keyword>
<keyword id="KW-0693">Viral RNA replication</keyword>
<keyword id="KW-0946">Virion</keyword>
<accession>P31817</accession>
<evidence type="ECO:0000250" key="1"/>
<evidence type="ECO:0000255" key="2">
    <source>
        <dbReference type="PROSITE-ProRule" id="PRU00539"/>
    </source>
</evidence>
<evidence type="ECO:0000269" key="3">
    <source>
    </source>
</evidence>
<name>RDRP_IBDV5</name>
<comment type="function">
    <text evidence="1 3">RNA-dependent RNA polymerase which is found both free and covalently attached to the genomic RNA. May also contain guanylyl and methyl transferase activities (By similarity).</text>
</comment>
<comment type="catalytic activity">
    <reaction evidence="2">
        <text>RNA(n) + a ribonucleoside 5'-triphosphate = RNA(n+1) + diphosphate</text>
        <dbReference type="Rhea" id="RHEA:21248"/>
        <dbReference type="Rhea" id="RHEA-COMP:14527"/>
        <dbReference type="Rhea" id="RHEA-COMP:17342"/>
        <dbReference type="ChEBI" id="CHEBI:33019"/>
        <dbReference type="ChEBI" id="CHEBI:61557"/>
        <dbReference type="ChEBI" id="CHEBI:140395"/>
        <dbReference type="EC" id="2.7.7.48"/>
    </reaction>
</comment>
<comment type="subunit">
    <text evidence="1">Interacts with VP3 in the cytoplasm.</text>
</comment>
<comment type="subcellular location">
    <subcellularLocation>
        <location evidence="1">Virion</location>
    </subcellularLocation>
    <text evidence="1">Minor amounts are incorporated in the virion.</text>
</comment>
<comment type="PTM">
    <text>May exist in multiple phosphorylated forms.</text>
</comment>
<organismHost>
    <name type="scientific">Gallus gallus</name>
    <name type="common">Chicken</name>
    <dbReference type="NCBI Taxonomy" id="9031"/>
</organismHost>
<organismHost>
    <name type="scientific">Meleagris gallopavo</name>
    <name type="common">Wild turkey</name>
    <dbReference type="NCBI Taxonomy" id="9103"/>
</organismHost>
<dbReference type="EC" id="2.7.7.48"/>
<dbReference type="EMBL" id="D12610">
    <property type="protein sequence ID" value="BAA02135.1"/>
    <property type="molecule type" value="Genomic_RNA"/>
</dbReference>
<dbReference type="PIR" id="PS0378">
    <property type="entry name" value="RRXSI5"/>
</dbReference>
<dbReference type="SMR" id="P31817"/>
<dbReference type="GO" id="GO:0044423">
    <property type="term" value="C:virion component"/>
    <property type="evidence" value="ECO:0007669"/>
    <property type="project" value="UniProtKB-KW"/>
</dbReference>
<dbReference type="GO" id="GO:0005525">
    <property type="term" value="F:GTP binding"/>
    <property type="evidence" value="ECO:0007669"/>
    <property type="project" value="UniProtKB-KW"/>
</dbReference>
<dbReference type="GO" id="GO:0003968">
    <property type="term" value="F:RNA-directed RNA polymerase activity"/>
    <property type="evidence" value="ECO:0007669"/>
    <property type="project" value="UniProtKB-KW"/>
</dbReference>
<dbReference type="GO" id="GO:0019079">
    <property type="term" value="P:viral genome replication"/>
    <property type="evidence" value="ECO:0007669"/>
    <property type="project" value="InterPro"/>
</dbReference>
<dbReference type="Gene3D" id="1.10.1740.80">
    <property type="match status" value="1"/>
</dbReference>
<dbReference type="Gene3D" id="6.10.140.300">
    <property type="match status" value="1"/>
</dbReference>
<dbReference type="Gene3D" id="3.90.1730.10">
    <property type="entry name" value="Infectious bursal virus vp1 polymerase domain"/>
    <property type="match status" value="2"/>
</dbReference>
<dbReference type="InterPro" id="IPR046814">
    <property type="entry name" value="Avibirnavurs_RdRp_C_sf"/>
</dbReference>
<dbReference type="InterPro" id="IPR046750">
    <property type="entry name" value="Birnavirus_RdRp_C"/>
</dbReference>
<dbReference type="InterPro" id="IPR007100">
    <property type="entry name" value="Birnavirus_RdRp_palm"/>
</dbReference>
<dbReference type="InterPro" id="IPR046812">
    <property type="entry name" value="Birnavirus_RdRp_palm_sf"/>
</dbReference>
<dbReference type="InterPro" id="IPR046752">
    <property type="entry name" value="Birnavirus_RdRp_thumb"/>
</dbReference>
<dbReference type="InterPro" id="IPR046813">
    <property type="entry name" value="Birnavirus_RdRp_thumb_sf"/>
</dbReference>
<dbReference type="InterPro" id="IPR043502">
    <property type="entry name" value="DNA/RNA_pol_sf"/>
</dbReference>
<dbReference type="Pfam" id="PF20489">
    <property type="entry name" value="Birna_RdRp_C"/>
    <property type="match status" value="1"/>
</dbReference>
<dbReference type="Pfam" id="PF04197">
    <property type="entry name" value="Birna_RdRp_palm"/>
    <property type="match status" value="1"/>
</dbReference>
<dbReference type="Pfam" id="PF20488">
    <property type="entry name" value="Birna_VP1_thumb"/>
    <property type="match status" value="1"/>
</dbReference>
<dbReference type="SUPFAM" id="SSF56672">
    <property type="entry name" value="DNA/RNA polymerases"/>
    <property type="match status" value="1"/>
</dbReference>
<dbReference type="PROSITE" id="PS50524">
    <property type="entry name" value="RDRP_DSRNA_BIR"/>
    <property type="match status" value="1"/>
</dbReference>
<feature type="chain" id="PRO_0000221961" description="RNA-directed RNA polymerase">
    <location>
        <begin position="1" status="less than"/>
        <end position="525" status="greater than"/>
    </location>
</feature>
<feature type="domain" description="RdRp catalytic" evidence="2">
    <location>
        <begin position="72"/>
        <end position="272"/>
    </location>
</feature>
<feature type="non-terminal residue">
    <location>
        <position position="1"/>
    </location>
</feature>
<feature type="non-terminal residue">
    <location>
        <position position="525"/>
    </location>
</feature>
<sequence>KSTWLTKTRNIWSAPSPTHLMISMITWPVMSNSPNNVLNIEGCPSLYKFNPFRGGLNRIVEWILAPEEPKALVYADNIYIVHSNTWYSIDLEKGEANCTRQHMQAAMYYILTRGWSDNGDPMFNQTWATFAMNIAPALVVDSSCLIMNLQIKTYGQGSGNAATFINNHLLSTLVLDQWNLMRQPRPDSEEFKSIEDKLGINFKIERSIDDIRGKLRQLVPLAQPGYLSGGVEPEQSSPTVELDLLGWSATYSKDLGIYVPVLDKERLFCSAAYPKGVENKSLKSKVGIEQAYKVVRYEALRLVGGWNYPLLNKACKNNAGAARRHLEAKGFPLDEFLAEWSELSEFGEAFEGFNIKLTVTSESLAELNKPVPPKPPNVNRPVNTGGLKAVSNALKTGRYRNEAGLSGLVLLATARSRLQDAVKAKAEAEKLHKSKPDDPDADWFERSETLSDLLEKADIASKVAHSALVETSDALEAVQSTSVYTPKYPEVKNPQTASNPVVGLHLPAKRATGVQAALLGAGTSR</sequence>
<proteinExistence type="inferred from homology"/>
<gene>
    <name type="primary">VP1</name>
</gene>
<reference key="1">
    <citation type="thesis" date="1980" institute="University College of Wales" country="United Kingdom">
        <authorList>
            <person name="Bayliss C.D."/>
        </authorList>
    </citation>
    <scope>NUCLEOTIDE SEQUENCE [GENOMIC RNA]</scope>
</reference>
<reference key="2">
    <citation type="journal article" date="1990" name="J. Gen. Virol.">
        <title>Demonstration of enzyme activities required for cap structure formation in infectious bursal disease virus, a member of the birnavirus group.</title>
        <authorList>
            <person name="Spies U."/>
            <person name="Muller H."/>
        </authorList>
    </citation>
    <scope>FUNCTION</scope>
</reference>
<protein>
    <recommendedName>
        <fullName>RNA-directed RNA polymerase</fullName>
        <shortName>RDRP</shortName>
        <ecNumber>2.7.7.48</ecNumber>
    </recommendedName>
    <alternativeName>
        <fullName>Protein VP1</fullName>
    </alternativeName>
</protein>
<organism>
    <name type="scientific">Avian infectious bursal disease virus (strain 52/70)</name>
    <name type="common">IBDV</name>
    <name type="synonym">Gumboro disease virus</name>
    <dbReference type="NCBI Taxonomy" id="10996"/>
    <lineage>
        <taxon>Viruses</taxon>
        <taxon>Riboviria</taxon>
        <taxon>Orthornavirae</taxon>
        <taxon>Birnaviridae</taxon>
        <taxon>Avibirnavirus</taxon>
        <taxon>Avibirnavirus gumboroense</taxon>
    </lineage>
</organism>